<keyword id="KW-0021">Allosteric enzyme</keyword>
<keyword id="KW-0067">ATP-binding</keyword>
<keyword id="KW-0963">Cytoplasm</keyword>
<keyword id="KW-0324">Glycolysis</keyword>
<keyword id="KW-0418">Kinase</keyword>
<keyword id="KW-0460">Magnesium</keyword>
<keyword id="KW-0479">Metal-binding</keyword>
<keyword id="KW-0547">Nucleotide-binding</keyword>
<keyword id="KW-0808">Transferase</keyword>
<reference key="1">
    <citation type="journal article" date="2010" name="J. Bacteriol.">
        <title>Genome sequence of the deep-rooted Yersinia pestis strain Angola reveals new insights into the evolution and pangenome of the plague bacterium.</title>
        <authorList>
            <person name="Eppinger M."/>
            <person name="Worsham P.L."/>
            <person name="Nikolich M.P."/>
            <person name="Riley D.R."/>
            <person name="Sebastian Y."/>
            <person name="Mou S."/>
            <person name="Achtman M."/>
            <person name="Lindler L.E."/>
            <person name="Ravel J."/>
        </authorList>
    </citation>
    <scope>NUCLEOTIDE SEQUENCE [LARGE SCALE GENOMIC DNA]</scope>
    <source>
        <strain>Angola</strain>
    </source>
</reference>
<comment type="function">
    <text evidence="1">Catalyzes the phosphorylation of D-fructose 6-phosphate to fructose 1,6-bisphosphate by ATP, the first committing step of glycolysis.</text>
</comment>
<comment type="catalytic activity">
    <reaction evidence="1">
        <text>beta-D-fructose 6-phosphate + ATP = beta-D-fructose 1,6-bisphosphate + ADP + H(+)</text>
        <dbReference type="Rhea" id="RHEA:16109"/>
        <dbReference type="ChEBI" id="CHEBI:15378"/>
        <dbReference type="ChEBI" id="CHEBI:30616"/>
        <dbReference type="ChEBI" id="CHEBI:32966"/>
        <dbReference type="ChEBI" id="CHEBI:57634"/>
        <dbReference type="ChEBI" id="CHEBI:456216"/>
        <dbReference type="EC" id="2.7.1.11"/>
    </reaction>
</comment>
<comment type="cofactor">
    <cofactor evidence="1">
        <name>Mg(2+)</name>
        <dbReference type="ChEBI" id="CHEBI:18420"/>
    </cofactor>
</comment>
<comment type="activity regulation">
    <text evidence="1">Allosterically activated by ADP and other diphosphonucleosides, and allosterically inhibited by phosphoenolpyruvate.</text>
</comment>
<comment type="pathway">
    <text evidence="1">Carbohydrate degradation; glycolysis; D-glyceraldehyde 3-phosphate and glycerone phosphate from D-glucose: step 3/4.</text>
</comment>
<comment type="subunit">
    <text evidence="1">Homotetramer.</text>
</comment>
<comment type="subcellular location">
    <subcellularLocation>
        <location evidence="1">Cytoplasm</location>
    </subcellularLocation>
</comment>
<comment type="similarity">
    <text evidence="1">Belongs to the phosphofructokinase type A (PFKA) family. ATP-dependent PFK group I subfamily. Prokaryotic clade 'B1' sub-subfamily.</text>
</comment>
<name>PFKA_YERPG</name>
<proteinExistence type="inferred from homology"/>
<gene>
    <name evidence="1" type="primary">pfkA</name>
    <name type="ordered locus">YpAngola_A0088</name>
</gene>
<sequence length="327" mass="35395">MVKKIGVLTSGGDAPGMNAAIRGVVRAALSAGLDVFGIEDGYLGLYENRMKKLDRYSVSDMINRGGTFLGSARFPEFRDPEVRKVALKNMHERGIDGLVVIGGDGSYAGADLLTKEGGIHCVGLPGTIDNDVAGTDYTIGFFTALETVVEAIDRLRDTSSSHQRISIVEVMGRYCGDLTLAAAIAGGCEFIAIPEVEFKRDDLVAEIKAGIAKGKKHAIVAITEKLDDIDSLAKYIEKETGRETRGTVLGHIQRGGAPVAYDRILASRMGAYAVDLLLQDHDYKKGGFCVGVQNEKMVHELISVCIAPENKKSKFKEDWYDTAKKLF</sequence>
<evidence type="ECO:0000255" key="1">
    <source>
        <dbReference type="HAMAP-Rule" id="MF_00339"/>
    </source>
</evidence>
<protein>
    <recommendedName>
        <fullName evidence="1">ATP-dependent 6-phosphofructokinase</fullName>
        <shortName evidence="1">ATP-PFK</shortName>
        <shortName evidence="1">Phosphofructokinase</shortName>
        <ecNumber evidence="1">2.7.1.11</ecNumber>
    </recommendedName>
    <alternativeName>
        <fullName evidence="1">Phosphohexokinase</fullName>
    </alternativeName>
</protein>
<dbReference type="EC" id="2.7.1.11" evidence="1"/>
<dbReference type="EMBL" id="CP000901">
    <property type="protein sequence ID" value="ABX86207.1"/>
    <property type="molecule type" value="Genomic_DNA"/>
</dbReference>
<dbReference type="RefSeq" id="WP_002208966.1">
    <property type="nucleotide sequence ID" value="NZ_CP009935.1"/>
</dbReference>
<dbReference type="SMR" id="A9R6A3"/>
<dbReference type="GeneID" id="57974514"/>
<dbReference type="KEGG" id="ypg:YpAngola_A0088"/>
<dbReference type="PATRIC" id="fig|349746.12.peg.1032"/>
<dbReference type="UniPathway" id="UPA00109">
    <property type="reaction ID" value="UER00182"/>
</dbReference>
<dbReference type="GO" id="GO:0005945">
    <property type="term" value="C:6-phosphofructokinase complex"/>
    <property type="evidence" value="ECO:0007669"/>
    <property type="project" value="TreeGrafter"/>
</dbReference>
<dbReference type="GO" id="GO:0003872">
    <property type="term" value="F:6-phosphofructokinase activity"/>
    <property type="evidence" value="ECO:0007669"/>
    <property type="project" value="UniProtKB-UniRule"/>
</dbReference>
<dbReference type="GO" id="GO:0016208">
    <property type="term" value="F:AMP binding"/>
    <property type="evidence" value="ECO:0007669"/>
    <property type="project" value="TreeGrafter"/>
</dbReference>
<dbReference type="GO" id="GO:0005524">
    <property type="term" value="F:ATP binding"/>
    <property type="evidence" value="ECO:0007669"/>
    <property type="project" value="UniProtKB-KW"/>
</dbReference>
<dbReference type="GO" id="GO:0070095">
    <property type="term" value="F:fructose-6-phosphate binding"/>
    <property type="evidence" value="ECO:0007669"/>
    <property type="project" value="TreeGrafter"/>
</dbReference>
<dbReference type="GO" id="GO:0042802">
    <property type="term" value="F:identical protein binding"/>
    <property type="evidence" value="ECO:0007669"/>
    <property type="project" value="TreeGrafter"/>
</dbReference>
<dbReference type="GO" id="GO:0046872">
    <property type="term" value="F:metal ion binding"/>
    <property type="evidence" value="ECO:0007669"/>
    <property type="project" value="UniProtKB-KW"/>
</dbReference>
<dbReference type="GO" id="GO:0048029">
    <property type="term" value="F:monosaccharide binding"/>
    <property type="evidence" value="ECO:0007669"/>
    <property type="project" value="TreeGrafter"/>
</dbReference>
<dbReference type="GO" id="GO:0061621">
    <property type="term" value="P:canonical glycolysis"/>
    <property type="evidence" value="ECO:0007669"/>
    <property type="project" value="TreeGrafter"/>
</dbReference>
<dbReference type="GO" id="GO:0030388">
    <property type="term" value="P:fructose 1,6-bisphosphate metabolic process"/>
    <property type="evidence" value="ECO:0007669"/>
    <property type="project" value="TreeGrafter"/>
</dbReference>
<dbReference type="GO" id="GO:0006002">
    <property type="term" value="P:fructose 6-phosphate metabolic process"/>
    <property type="evidence" value="ECO:0007669"/>
    <property type="project" value="InterPro"/>
</dbReference>
<dbReference type="FunFam" id="3.40.50.450:FF:000001">
    <property type="entry name" value="ATP-dependent 6-phosphofructokinase"/>
    <property type="match status" value="1"/>
</dbReference>
<dbReference type="FunFam" id="3.40.50.460:FF:000002">
    <property type="entry name" value="ATP-dependent 6-phosphofructokinase"/>
    <property type="match status" value="1"/>
</dbReference>
<dbReference type="Gene3D" id="3.40.50.450">
    <property type="match status" value="1"/>
</dbReference>
<dbReference type="Gene3D" id="3.40.50.460">
    <property type="entry name" value="Phosphofructokinase domain"/>
    <property type="match status" value="1"/>
</dbReference>
<dbReference type="HAMAP" id="MF_00339">
    <property type="entry name" value="Phosphofructokinase_I_B1"/>
    <property type="match status" value="1"/>
</dbReference>
<dbReference type="InterPro" id="IPR022953">
    <property type="entry name" value="ATP_PFK"/>
</dbReference>
<dbReference type="InterPro" id="IPR012003">
    <property type="entry name" value="ATP_PFK_prok-type"/>
</dbReference>
<dbReference type="InterPro" id="IPR012828">
    <property type="entry name" value="PFKA_ATP_prok"/>
</dbReference>
<dbReference type="InterPro" id="IPR015912">
    <property type="entry name" value="Phosphofructokinase_CS"/>
</dbReference>
<dbReference type="InterPro" id="IPR000023">
    <property type="entry name" value="Phosphofructokinase_dom"/>
</dbReference>
<dbReference type="InterPro" id="IPR035966">
    <property type="entry name" value="PKF_sf"/>
</dbReference>
<dbReference type="NCBIfam" id="TIGR02482">
    <property type="entry name" value="PFKA_ATP"/>
    <property type="match status" value="1"/>
</dbReference>
<dbReference type="NCBIfam" id="NF002872">
    <property type="entry name" value="PRK03202.1"/>
    <property type="match status" value="1"/>
</dbReference>
<dbReference type="PANTHER" id="PTHR13697:SF4">
    <property type="entry name" value="ATP-DEPENDENT 6-PHOSPHOFRUCTOKINASE"/>
    <property type="match status" value="1"/>
</dbReference>
<dbReference type="PANTHER" id="PTHR13697">
    <property type="entry name" value="PHOSPHOFRUCTOKINASE"/>
    <property type="match status" value="1"/>
</dbReference>
<dbReference type="Pfam" id="PF00365">
    <property type="entry name" value="PFK"/>
    <property type="match status" value="1"/>
</dbReference>
<dbReference type="PIRSF" id="PIRSF000532">
    <property type="entry name" value="ATP_PFK_prok"/>
    <property type="match status" value="1"/>
</dbReference>
<dbReference type="PRINTS" id="PR00476">
    <property type="entry name" value="PHFRCTKINASE"/>
</dbReference>
<dbReference type="SUPFAM" id="SSF53784">
    <property type="entry name" value="Phosphofructokinase"/>
    <property type="match status" value="1"/>
</dbReference>
<dbReference type="PROSITE" id="PS00433">
    <property type="entry name" value="PHOSPHOFRUCTOKINASE"/>
    <property type="match status" value="1"/>
</dbReference>
<organism>
    <name type="scientific">Yersinia pestis bv. Antiqua (strain Angola)</name>
    <dbReference type="NCBI Taxonomy" id="349746"/>
    <lineage>
        <taxon>Bacteria</taxon>
        <taxon>Pseudomonadati</taxon>
        <taxon>Pseudomonadota</taxon>
        <taxon>Gammaproteobacteria</taxon>
        <taxon>Enterobacterales</taxon>
        <taxon>Yersiniaceae</taxon>
        <taxon>Yersinia</taxon>
    </lineage>
</organism>
<feature type="chain" id="PRO_1000120069" description="ATP-dependent 6-phosphofructokinase">
    <location>
        <begin position="1"/>
        <end position="327"/>
    </location>
</feature>
<feature type="active site" description="Proton acceptor" evidence="1">
    <location>
        <position position="129"/>
    </location>
</feature>
<feature type="binding site" evidence="1">
    <location>
        <position position="12"/>
    </location>
    <ligand>
        <name>ATP</name>
        <dbReference type="ChEBI" id="CHEBI:30616"/>
    </ligand>
</feature>
<feature type="binding site" evidence="1">
    <location>
        <begin position="22"/>
        <end position="26"/>
    </location>
    <ligand>
        <name>ADP</name>
        <dbReference type="ChEBI" id="CHEBI:456216"/>
        <note>allosteric activator; ligand shared between dimeric partners</note>
    </ligand>
</feature>
<feature type="binding site" evidence="1">
    <location>
        <begin position="55"/>
        <end position="60"/>
    </location>
    <ligand>
        <name>ADP</name>
        <dbReference type="ChEBI" id="CHEBI:456216"/>
        <note>allosteric activator; ligand shared between dimeric partners</note>
    </ligand>
</feature>
<feature type="binding site" evidence="1">
    <location>
        <begin position="73"/>
        <end position="74"/>
    </location>
    <ligand>
        <name>ATP</name>
        <dbReference type="ChEBI" id="CHEBI:30616"/>
    </ligand>
</feature>
<feature type="binding site" evidence="1">
    <location>
        <begin position="103"/>
        <end position="106"/>
    </location>
    <ligand>
        <name>ATP</name>
        <dbReference type="ChEBI" id="CHEBI:30616"/>
    </ligand>
</feature>
<feature type="binding site" evidence="1">
    <location>
        <position position="104"/>
    </location>
    <ligand>
        <name>Mg(2+)</name>
        <dbReference type="ChEBI" id="CHEBI:18420"/>
        <note>catalytic</note>
    </ligand>
</feature>
<feature type="binding site" description="in other chain" evidence="1">
    <location>
        <begin position="127"/>
        <end position="129"/>
    </location>
    <ligand>
        <name>substrate</name>
        <note>ligand shared between dimeric partners</note>
    </ligand>
</feature>
<feature type="binding site" description="in other chain" evidence="1">
    <location>
        <position position="156"/>
    </location>
    <ligand>
        <name>ADP</name>
        <dbReference type="ChEBI" id="CHEBI:456216"/>
        <note>allosteric activator; ligand shared between dimeric partners</note>
    </ligand>
</feature>
<feature type="binding site" evidence="1">
    <location>
        <position position="164"/>
    </location>
    <ligand>
        <name>substrate</name>
        <note>ligand shared between dimeric partners</note>
    </ligand>
</feature>
<feature type="binding site" description="in other chain" evidence="1">
    <location>
        <begin position="171"/>
        <end position="173"/>
    </location>
    <ligand>
        <name>substrate</name>
        <note>ligand shared between dimeric partners</note>
    </ligand>
</feature>
<feature type="binding site" description="in other chain" evidence="1">
    <location>
        <begin position="187"/>
        <end position="189"/>
    </location>
    <ligand>
        <name>ADP</name>
        <dbReference type="ChEBI" id="CHEBI:456216"/>
        <note>allosteric activator; ligand shared between dimeric partners</note>
    </ligand>
</feature>
<feature type="binding site" description="in other chain" evidence="1">
    <location>
        <position position="213"/>
    </location>
    <ligand>
        <name>ADP</name>
        <dbReference type="ChEBI" id="CHEBI:456216"/>
        <note>allosteric activator; ligand shared between dimeric partners</note>
    </ligand>
</feature>
<feature type="binding site" description="in other chain" evidence="1">
    <location>
        <begin position="215"/>
        <end position="217"/>
    </location>
    <ligand>
        <name>ADP</name>
        <dbReference type="ChEBI" id="CHEBI:456216"/>
        <note>allosteric activator; ligand shared between dimeric partners</note>
    </ligand>
</feature>
<feature type="binding site" description="in other chain" evidence="1">
    <location>
        <position position="224"/>
    </location>
    <ligand>
        <name>substrate</name>
        <note>ligand shared between dimeric partners</note>
    </ligand>
</feature>
<feature type="binding site" evidence="1">
    <location>
        <position position="245"/>
    </location>
    <ligand>
        <name>substrate</name>
        <note>ligand shared between dimeric partners</note>
    </ligand>
</feature>
<feature type="binding site" description="in other chain" evidence="1">
    <location>
        <begin position="251"/>
        <end position="254"/>
    </location>
    <ligand>
        <name>substrate</name>
        <note>ligand shared between dimeric partners</note>
    </ligand>
</feature>
<accession>A9R6A3</accession>